<reference key="1">
    <citation type="journal article" date="2009" name="PLoS Genet.">
        <title>Organised genome dynamics in the Escherichia coli species results in highly diverse adaptive paths.</title>
        <authorList>
            <person name="Touchon M."/>
            <person name="Hoede C."/>
            <person name="Tenaillon O."/>
            <person name="Barbe V."/>
            <person name="Baeriswyl S."/>
            <person name="Bidet P."/>
            <person name="Bingen E."/>
            <person name="Bonacorsi S."/>
            <person name="Bouchier C."/>
            <person name="Bouvet O."/>
            <person name="Calteau A."/>
            <person name="Chiapello H."/>
            <person name="Clermont O."/>
            <person name="Cruveiller S."/>
            <person name="Danchin A."/>
            <person name="Diard M."/>
            <person name="Dossat C."/>
            <person name="Karoui M.E."/>
            <person name="Frapy E."/>
            <person name="Garry L."/>
            <person name="Ghigo J.M."/>
            <person name="Gilles A.M."/>
            <person name="Johnson J."/>
            <person name="Le Bouguenec C."/>
            <person name="Lescat M."/>
            <person name="Mangenot S."/>
            <person name="Martinez-Jehanne V."/>
            <person name="Matic I."/>
            <person name="Nassif X."/>
            <person name="Oztas S."/>
            <person name="Petit M.A."/>
            <person name="Pichon C."/>
            <person name="Rouy Z."/>
            <person name="Ruf C.S."/>
            <person name="Schneider D."/>
            <person name="Tourret J."/>
            <person name="Vacherie B."/>
            <person name="Vallenet D."/>
            <person name="Medigue C."/>
            <person name="Rocha E.P.C."/>
            <person name="Denamur E."/>
        </authorList>
    </citation>
    <scope>NUCLEOTIDE SEQUENCE [LARGE SCALE GENOMIC DNA]</scope>
    <source>
        <strain>IAI1</strain>
    </source>
</reference>
<gene>
    <name evidence="1" type="primary">prfB</name>
    <name type="ordered locus">ECIAI1_3010</name>
</gene>
<proteinExistence type="inferred from homology"/>
<comment type="function">
    <text evidence="1">Peptide chain release factor 2 directs the termination of translation in response to the peptide chain termination codons UGA and UAA.</text>
</comment>
<comment type="subcellular location">
    <subcellularLocation>
        <location evidence="1">Cytoplasm</location>
    </subcellularLocation>
</comment>
<comment type="PTM">
    <text evidence="1">Methylated by PrmC. Methylation increases the termination efficiency of RF2.</text>
</comment>
<comment type="similarity">
    <text evidence="1">Belongs to the prokaryotic/mitochondrial release factor family.</text>
</comment>
<evidence type="ECO:0000255" key="1">
    <source>
        <dbReference type="HAMAP-Rule" id="MF_00094"/>
    </source>
</evidence>
<sequence length="365" mass="41168">MFEINPVNNCIQDLTERSDVLRGYLDYDAKKERLEEVNAELEQPDVWNEPERAQALGKERSSLEAVVDTLDQMKQGLEDVSGLLELAVEADDEETFNEAVAELDALEEKLAQLEFRRMFSGEYDSADCYLDIQAGSGGTEAQDWASMLERMYLRWAESRGFKTEIIEESEGEVAGIKSVTIKISGDYAYGWLRTETGVHRLVRKSPFDSGGRRHTSFSSAFVYPEVDDDIDIEINPADLRIDVYRASGAGGQHVNRTESAVRITHIPTGIVTQCQNDRSQHKNKDQAMKQMKAKLYELEMQKKNAEKQAMEDNKSDIGWGSQIRSYVLDDSRIKDLRTGVETRNTQAVLDGSLDQFIEASLKAGL</sequence>
<keyword id="KW-0963">Cytoplasm</keyword>
<keyword id="KW-0488">Methylation</keyword>
<keyword id="KW-0648">Protein biosynthesis</keyword>
<accession>B7LYF5</accession>
<feature type="chain" id="PRO_1000117260" description="Peptide chain release factor 2">
    <location>
        <begin position="1"/>
        <end position="365"/>
    </location>
</feature>
<feature type="modified residue" description="N5-methylglutamine" evidence="1">
    <location>
        <position position="252"/>
    </location>
</feature>
<organism>
    <name type="scientific">Escherichia coli O8 (strain IAI1)</name>
    <dbReference type="NCBI Taxonomy" id="585034"/>
    <lineage>
        <taxon>Bacteria</taxon>
        <taxon>Pseudomonadati</taxon>
        <taxon>Pseudomonadota</taxon>
        <taxon>Gammaproteobacteria</taxon>
        <taxon>Enterobacterales</taxon>
        <taxon>Enterobacteriaceae</taxon>
        <taxon>Escherichia</taxon>
    </lineage>
</organism>
<protein>
    <recommendedName>
        <fullName evidence="1">Peptide chain release factor 2</fullName>
        <shortName evidence="1">RF-2</shortName>
    </recommendedName>
</protein>
<dbReference type="EMBL" id="CU928160">
    <property type="protein sequence ID" value="CAQ99825.2"/>
    <property type="molecule type" value="Genomic_DNA"/>
</dbReference>
<dbReference type="RefSeq" id="WP_015953220.1">
    <property type="nucleotide sequence ID" value="NC_011741.1"/>
</dbReference>
<dbReference type="SMR" id="B7LYF5"/>
<dbReference type="KEGG" id="ecr:ECIAI1_3010"/>
<dbReference type="HOGENOM" id="CLU_220733_1_0_6"/>
<dbReference type="GO" id="GO:0005737">
    <property type="term" value="C:cytoplasm"/>
    <property type="evidence" value="ECO:0007669"/>
    <property type="project" value="UniProtKB-SubCell"/>
</dbReference>
<dbReference type="GO" id="GO:0016149">
    <property type="term" value="F:translation release factor activity, codon specific"/>
    <property type="evidence" value="ECO:0007669"/>
    <property type="project" value="UniProtKB-UniRule"/>
</dbReference>
<dbReference type="FunFam" id="1.20.58.410:FF:000001">
    <property type="entry name" value="Peptide chain release factor 2"/>
    <property type="match status" value="1"/>
</dbReference>
<dbReference type="FunFam" id="3.30.160.20:FF:000010">
    <property type="entry name" value="Peptide chain release factor 2"/>
    <property type="match status" value="1"/>
</dbReference>
<dbReference type="Gene3D" id="3.30.160.20">
    <property type="match status" value="1"/>
</dbReference>
<dbReference type="Gene3D" id="3.30.70.1660">
    <property type="match status" value="1"/>
</dbReference>
<dbReference type="Gene3D" id="1.20.58.410">
    <property type="entry name" value="Release factor"/>
    <property type="match status" value="1"/>
</dbReference>
<dbReference type="HAMAP" id="MF_00094">
    <property type="entry name" value="Rel_fac_2"/>
    <property type="match status" value="1"/>
</dbReference>
<dbReference type="InterPro" id="IPR005139">
    <property type="entry name" value="PCRF"/>
</dbReference>
<dbReference type="InterPro" id="IPR000352">
    <property type="entry name" value="Pep_chain_release_fac_I"/>
</dbReference>
<dbReference type="InterPro" id="IPR045853">
    <property type="entry name" value="Pep_chain_release_fac_I_sf"/>
</dbReference>
<dbReference type="InterPro" id="IPR004374">
    <property type="entry name" value="PrfB"/>
</dbReference>
<dbReference type="NCBIfam" id="TIGR00020">
    <property type="entry name" value="prfB"/>
    <property type="match status" value="1"/>
</dbReference>
<dbReference type="PANTHER" id="PTHR43116:SF3">
    <property type="entry name" value="CLASS I PEPTIDE CHAIN RELEASE FACTOR"/>
    <property type="match status" value="1"/>
</dbReference>
<dbReference type="PANTHER" id="PTHR43116">
    <property type="entry name" value="PEPTIDE CHAIN RELEASE FACTOR 2"/>
    <property type="match status" value="1"/>
</dbReference>
<dbReference type="Pfam" id="PF03462">
    <property type="entry name" value="PCRF"/>
    <property type="match status" value="1"/>
</dbReference>
<dbReference type="Pfam" id="PF00472">
    <property type="entry name" value="RF-1"/>
    <property type="match status" value="1"/>
</dbReference>
<dbReference type="SMART" id="SM00937">
    <property type="entry name" value="PCRF"/>
    <property type="match status" value="1"/>
</dbReference>
<dbReference type="SUPFAM" id="SSF75620">
    <property type="entry name" value="Release factor"/>
    <property type="match status" value="1"/>
</dbReference>
<dbReference type="PROSITE" id="PS00745">
    <property type="entry name" value="RF_PROK_I"/>
    <property type="match status" value="1"/>
</dbReference>
<name>RF2_ECO8A</name>